<reference key="1">
    <citation type="journal article" date="2004" name="Nat. Genet.">
        <title>Complete sequencing and characterization of 21,243 full-length human cDNAs.</title>
        <authorList>
            <person name="Ota T."/>
            <person name="Suzuki Y."/>
            <person name="Nishikawa T."/>
            <person name="Otsuki T."/>
            <person name="Sugiyama T."/>
            <person name="Irie R."/>
            <person name="Wakamatsu A."/>
            <person name="Hayashi K."/>
            <person name="Sato H."/>
            <person name="Nagai K."/>
            <person name="Kimura K."/>
            <person name="Makita H."/>
            <person name="Sekine M."/>
            <person name="Obayashi M."/>
            <person name="Nishi T."/>
            <person name="Shibahara T."/>
            <person name="Tanaka T."/>
            <person name="Ishii S."/>
            <person name="Yamamoto J."/>
            <person name="Saito K."/>
            <person name="Kawai Y."/>
            <person name="Isono Y."/>
            <person name="Nakamura Y."/>
            <person name="Nagahari K."/>
            <person name="Murakami K."/>
            <person name="Yasuda T."/>
            <person name="Iwayanagi T."/>
            <person name="Wagatsuma M."/>
            <person name="Shiratori A."/>
            <person name="Sudo H."/>
            <person name="Hosoiri T."/>
            <person name="Kaku Y."/>
            <person name="Kodaira H."/>
            <person name="Kondo H."/>
            <person name="Sugawara M."/>
            <person name="Takahashi M."/>
            <person name="Kanda K."/>
            <person name="Yokoi T."/>
            <person name="Furuya T."/>
            <person name="Kikkawa E."/>
            <person name="Omura Y."/>
            <person name="Abe K."/>
            <person name="Kamihara K."/>
            <person name="Katsuta N."/>
            <person name="Sato K."/>
            <person name="Tanikawa M."/>
            <person name="Yamazaki M."/>
            <person name="Ninomiya K."/>
            <person name="Ishibashi T."/>
            <person name="Yamashita H."/>
            <person name="Murakawa K."/>
            <person name="Fujimori K."/>
            <person name="Tanai H."/>
            <person name="Kimata M."/>
            <person name="Watanabe M."/>
            <person name="Hiraoka S."/>
            <person name="Chiba Y."/>
            <person name="Ishida S."/>
            <person name="Ono Y."/>
            <person name="Takiguchi S."/>
            <person name="Watanabe S."/>
            <person name="Yosida M."/>
            <person name="Hotuta T."/>
            <person name="Kusano J."/>
            <person name="Kanehori K."/>
            <person name="Takahashi-Fujii A."/>
            <person name="Hara H."/>
            <person name="Tanase T.-O."/>
            <person name="Nomura Y."/>
            <person name="Togiya S."/>
            <person name="Komai F."/>
            <person name="Hara R."/>
            <person name="Takeuchi K."/>
            <person name="Arita M."/>
            <person name="Imose N."/>
            <person name="Musashino K."/>
            <person name="Yuuki H."/>
            <person name="Oshima A."/>
            <person name="Sasaki N."/>
            <person name="Aotsuka S."/>
            <person name="Yoshikawa Y."/>
            <person name="Matsunawa H."/>
            <person name="Ichihara T."/>
            <person name="Shiohata N."/>
            <person name="Sano S."/>
            <person name="Moriya S."/>
            <person name="Momiyama H."/>
            <person name="Satoh N."/>
            <person name="Takami S."/>
            <person name="Terashima Y."/>
            <person name="Suzuki O."/>
            <person name="Nakagawa S."/>
            <person name="Senoh A."/>
            <person name="Mizoguchi H."/>
            <person name="Goto Y."/>
            <person name="Shimizu F."/>
            <person name="Wakebe H."/>
            <person name="Hishigaki H."/>
            <person name="Watanabe T."/>
            <person name="Sugiyama A."/>
            <person name="Takemoto M."/>
            <person name="Kawakami B."/>
            <person name="Yamazaki M."/>
            <person name="Watanabe K."/>
            <person name="Kumagai A."/>
            <person name="Itakura S."/>
            <person name="Fukuzumi Y."/>
            <person name="Fujimori Y."/>
            <person name="Komiyama M."/>
            <person name="Tashiro H."/>
            <person name="Tanigami A."/>
            <person name="Fujiwara T."/>
            <person name="Ono T."/>
            <person name="Yamada K."/>
            <person name="Fujii Y."/>
            <person name="Ozaki K."/>
            <person name="Hirao M."/>
            <person name="Ohmori Y."/>
            <person name="Kawabata A."/>
            <person name="Hikiji T."/>
            <person name="Kobatake N."/>
            <person name="Inagaki H."/>
            <person name="Ikema Y."/>
            <person name="Okamoto S."/>
            <person name="Okitani R."/>
            <person name="Kawakami T."/>
            <person name="Noguchi S."/>
            <person name="Itoh T."/>
            <person name="Shigeta K."/>
            <person name="Senba T."/>
            <person name="Matsumura K."/>
            <person name="Nakajima Y."/>
            <person name="Mizuno T."/>
            <person name="Morinaga M."/>
            <person name="Sasaki M."/>
            <person name="Togashi T."/>
            <person name="Oyama M."/>
            <person name="Hata H."/>
            <person name="Watanabe M."/>
            <person name="Komatsu T."/>
            <person name="Mizushima-Sugano J."/>
            <person name="Satoh T."/>
            <person name="Shirai Y."/>
            <person name="Takahashi Y."/>
            <person name="Nakagawa K."/>
            <person name="Okumura K."/>
            <person name="Nagase T."/>
            <person name="Nomura N."/>
            <person name="Kikuchi H."/>
            <person name="Masuho Y."/>
            <person name="Yamashita R."/>
            <person name="Nakai K."/>
            <person name="Yada T."/>
            <person name="Nakamura Y."/>
            <person name="Ohara O."/>
            <person name="Isogai T."/>
            <person name="Sugano S."/>
        </authorList>
    </citation>
    <scope>NUCLEOTIDE SEQUENCE [LARGE SCALE MRNA] (ISOFORM 2)</scope>
</reference>
<reference key="2">
    <citation type="journal article" date="2005" name="Nature">
        <title>Generation and annotation of the DNA sequences of human chromosomes 2 and 4.</title>
        <authorList>
            <person name="Hillier L.W."/>
            <person name="Graves T.A."/>
            <person name="Fulton R.S."/>
            <person name="Fulton L.A."/>
            <person name="Pepin K.H."/>
            <person name="Minx P."/>
            <person name="Wagner-McPherson C."/>
            <person name="Layman D."/>
            <person name="Wylie K."/>
            <person name="Sekhon M."/>
            <person name="Becker M.C."/>
            <person name="Fewell G.A."/>
            <person name="Delehaunty K.D."/>
            <person name="Miner T.L."/>
            <person name="Nash W.E."/>
            <person name="Kremitzki C."/>
            <person name="Oddy L."/>
            <person name="Du H."/>
            <person name="Sun H."/>
            <person name="Bradshaw-Cordum H."/>
            <person name="Ali J."/>
            <person name="Carter J."/>
            <person name="Cordes M."/>
            <person name="Harris A."/>
            <person name="Isak A."/>
            <person name="van Brunt A."/>
            <person name="Nguyen C."/>
            <person name="Du F."/>
            <person name="Courtney L."/>
            <person name="Kalicki J."/>
            <person name="Ozersky P."/>
            <person name="Abbott S."/>
            <person name="Armstrong J."/>
            <person name="Belter E.A."/>
            <person name="Caruso L."/>
            <person name="Cedroni M."/>
            <person name="Cotton M."/>
            <person name="Davidson T."/>
            <person name="Desai A."/>
            <person name="Elliott G."/>
            <person name="Erb T."/>
            <person name="Fronick C."/>
            <person name="Gaige T."/>
            <person name="Haakenson W."/>
            <person name="Haglund K."/>
            <person name="Holmes A."/>
            <person name="Harkins R."/>
            <person name="Kim K."/>
            <person name="Kruchowski S.S."/>
            <person name="Strong C.M."/>
            <person name="Grewal N."/>
            <person name="Goyea E."/>
            <person name="Hou S."/>
            <person name="Levy A."/>
            <person name="Martinka S."/>
            <person name="Mead K."/>
            <person name="McLellan M.D."/>
            <person name="Meyer R."/>
            <person name="Randall-Maher J."/>
            <person name="Tomlinson C."/>
            <person name="Dauphin-Kohlberg S."/>
            <person name="Kozlowicz-Reilly A."/>
            <person name="Shah N."/>
            <person name="Swearengen-Shahid S."/>
            <person name="Snider J."/>
            <person name="Strong J.T."/>
            <person name="Thompson J."/>
            <person name="Yoakum M."/>
            <person name="Leonard S."/>
            <person name="Pearman C."/>
            <person name="Trani L."/>
            <person name="Radionenko M."/>
            <person name="Waligorski J.E."/>
            <person name="Wang C."/>
            <person name="Rock S.M."/>
            <person name="Tin-Wollam A.-M."/>
            <person name="Maupin R."/>
            <person name="Latreille P."/>
            <person name="Wendl M.C."/>
            <person name="Yang S.-P."/>
            <person name="Pohl C."/>
            <person name="Wallis J.W."/>
            <person name="Spieth J."/>
            <person name="Bieri T.A."/>
            <person name="Berkowicz N."/>
            <person name="Nelson J.O."/>
            <person name="Osborne J."/>
            <person name="Ding L."/>
            <person name="Meyer R."/>
            <person name="Sabo A."/>
            <person name="Shotland Y."/>
            <person name="Sinha P."/>
            <person name="Wohldmann P.E."/>
            <person name="Cook L.L."/>
            <person name="Hickenbotham M.T."/>
            <person name="Eldred J."/>
            <person name="Williams D."/>
            <person name="Jones T.A."/>
            <person name="She X."/>
            <person name="Ciccarelli F.D."/>
            <person name="Izaurralde E."/>
            <person name="Taylor J."/>
            <person name="Schmutz J."/>
            <person name="Myers R.M."/>
            <person name="Cox D.R."/>
            <person name="Huang X."/>
            <person name="McPherson J.D."/>
            <person name="Mardis E.R."/>
            <person name="Clifton S.W."/>
            <person name="Warren W.C."/>
            <person name="Chinwalla A.T."/>
            <person name="Eddy S.R."/>
            <person name="Marra M.A."/>
            <person name="Ovcharenko I."/>
            <person name="Furey T.S."/>
            <person name="Miller W."/>
            <person name="Eichler E.E."/>
            <person name="Bork P."/>
            <person name="Suyama M."/>
            <person name="Torrents D."/>
            <person name="Waterston R.H."/>
            <person name="Wilson R.K."/>
        </authorList>
    </citation>
    <scope>NUCLEOTIDE SEQUENCE [LARGE SCALE GENOMIC DNA]</scope>
</reference>
<reference key="3">
    <citation type="submission" date="2005-09" db="EMBL/GenBank/DDBJ databases">
        <authorList>
            <person name="Mural R.J."/>
            <person name="Istrail S."/>
            <person name="Sutton G.G."/>
            <person name="Florea L."/>
            <person name="Halpern A.L."/>
            <person name="Mobarry C.M."/>
            <person name="Lippert R."/>
            <person name="Walenz B."/>
            <person name="Shatkay H."/>
            <person name="Dew I."/>
            <person name="Miller J.R."/>
            <person name="Flanigan M.J."/>
            <person name="Edwards N.J."/>
            <person name="Bolanos R."/>
            <person name="Fasulo D."/>
            <person name="Halldorsson B.V."/>
            <person name="Hannenhalli S."/>
            <person name="Turner R."/>
            <person name="Yooseph S."/>
            <person name="Lu F."/>
            <person name="Nusskern D.R."/>
            <person name="Shue B.C."/>
            <person name="Zheng X.H."/>
            <person name="Zhong F."/>
            <person name="Delcher A.L."/>
            <person name="Huson D.H."/>
            <person name="Kravitz S.A."/>
            <person name="Mouchard L."/>
            <person name="Reinert K."/>
            <person name="Remington K.A."/>
            <person name="Clark A.G."/>
            <person name="Waterman M.S."/>
            <person name="Eichler E.E."/>
            <person name="Adams M.D."/>
            <person name="Hunkapiller M.W."/>
            <person name="Myers E.W."/>
            <person name="Venter J.C."/>
        </authorList>
    </citation>
    <scope>NUCLEOTIDE SEQUENCE [LARGE SCALE GENOMIC DNA]</scope>
</reference>
<reference key="4">
    <citation type="journal article" date="2004" name="Genome Res.">
        <title>The status, quality, and expansion of the NIH full-length cDNA project: the Mammalian Gene Collection (MGC).</title>
        <authorList>
            <consortium name="The MGC Project Team"/>
        </authorList>
    </citation>
    <scope>NUCLEOTIDE SEQUENCE [LARGE SCALE MRNA] (ISOFORM 1)</scope>
    <source>
        <tissue>Eye</tissue>
        <tissue>Lung</tissue>
    </source>
</reference>
<reference key="5">
    <citation type="journal article" date="2007" name="BMC Genomics">
        <title>The full-ORF clone resource of the German cDNA consortium.</title>
        <authorList>
            <person name="Bechtel S."/>
            <person name="Rosenfelder H."/>
            <person name="Duda A."/>
            <person name="Schmidt C.P."/>
            <person name="Ernst U."/>
            <person name="Wellenreuther R."/>
            <person name="Mehrle A."/>
            <person name="Schuster C."/>
            <person name="Bahr A."/>
            <person name="Bloecker H."/>
            <person name="Heubner D."/>
            <person name="Hoerlein A."/>
            <person name="Michel G."/>
            <person name="Wedler H."/>
            <person name="Koehrer K."/>
            <person name="Ottenwaelder B."/>
            <person name="Poustka A."/>
            <person name="Wiemann S."/>
            <person name="Schupp I."/>
        </authorList>
    </citation>
    <scope>NUCLEOTIDE SEQUENCE [LARGE SCALE MRNA] OF 311-689</scope>
    <source>
        <tissue>Stomach</tissue>
    </source>
</reference>
<reference key="6">
    <citation type="submission" date="2003-04" db="EMBL/GenBank/DDBJ databases">
        <title>Identification of a human transforming gene.</title>
        <authorList>
            <person name="Kim J.W."/>
        </authorList>
    </citation>
    <scope>NUCLEOTIDE SEQUENCE [LARGE SCALE MRNA] OF 323-689</scope>
</reference>
<reference key="7">
    <citation type="journal article" date="2009" name="FEBS Lett.">
        <title>Pentatricopeptide repeat domain protein 3 associates with the mitochondrial small ribosomal subunit and regulates translation.</title>
        <authorList>
            <person name="Davies S.M."/>
            <person name="Rackham O."/>
            <person name="Shearwood A.M."/>
            <person name="Hamilton K.L."/>
            <person name="Narsai R."/>
            <person name="Whelan J."/>
            <person name="Filipovska A."/>
        </authorList>
    </citation>
    <scope>TISSUE SPECIFICITY</scope>
    <scope>SUBUNIT</scope>
    <scope>SUBCELLULAR LOCATION</scope>
    <scope>FUNCTION</scope>
</reference>
<reference key="8">
    <citation type="journal article" date="2009" name="Science">
        <title>Lysine acetylation targets protein complexes and co-regulates major cellular functions.</title>
        <authorList>
            <person name="Choudhary C."/>
            <person name="Kumar C."/>
            <person name="Gnad F."/>
            <person name="Nielsen M.L."/>
            <person name="Rehman M."/>
            <person name="Walther T.C."/>
            <person name="Olsen J.V."/>
            <person name="Mann M."/>
        </authorList>
    </citation>
    <scope>ACETYLATION [LARGE SCALE ANALYSIS] AT LYS-126</scope>
    <scope>IDENTIFICATION BY MASS SPECTROMETRY [LARGE SCALE ANALYSIS]</scope>
</reference>
<reference key="9">
    <citation type="journal article" date="2011" name="BMC Syst. Biol.">
        <title>Initial characterization of the human central proteome.</title>
        <authorList>
            <person name="Burkard T.R."/>
            <person name="Planyavsky M."/>
            <person name="Kaupe I."/>
            <person name="Breitwieser F.P."/>
            <person name="Buerckstuemmer T."/>
            <person name="Bennett K.L."/>
            <person name="Superti-Furga G."/>
            <person name="Colinge J."/>
        </authorList>
    </citation>
    <scope>IDENTIFICATION BY MASS SPECTROMETRY [LARGE SCALE ANALYSIS]</scope>
</reference>
<reference key="10">
    <citation type="journal article" date="2013" name="Front. Physiol.">
        <title>Identification and characterization of CHCHD1, AURKAIP1, and CRIF1 as new members of the mammalian mitochondrial ribosome.</title>
        <authorList>
            <person name="Koc E.C."/>
            <person name="Cimen H."/>
            <person name="Kumcuoglu B."/>
            <person name="Abu N."/>
            <person name="Akpinar G."/>
            <person name="Haque M.E."/>
            <person name="Spremulli L.L."/>
            <person name="Koc H."/>
        </authorList>
    </citation>
    <scope>SUBUNIT</scope>
    <scope>SUBCELLULAR LOCATION</scope>
</reference>
<reference key="11">
    <citation type="journal article" date="2013" name="J. Proteome Res.">
        <title>Toward a comprehensive characterization of a human cancer cell phosphoproteome.</title>
        <authorList>
            <person name="Zhou H."/>
            <person name="Di Palma S."/>
            <person name="Preisinger C."/>
            <person name="Peng M."/>
            <person name="Polat A.N."/>
            <person name="Heck A.J."/>
            <person name="Mohammed S."/>
        </authorList>
    </citation>
    <scope>IDENTIFICATION BY MASS SPECTROMETRY [LARGE SCALE ANALYSIS]</scope>
    <source>
        <tissue>Erythroleukemia</tissue>
    </source>
</reference>
<reference key="12">
    <citation type="journal article" date="2014" name="J. Proteomics">
        <title>An enzyme assisted RP-RPLC approach for in-depth analysis of human liver phosphoproteome.</title>
        <authorList>
            <person name="Bian Y."/>
            <person name="Song C."/>
            <person name="Cheng K."/>
            <person name="Dong M."/>
            <person name="Wang F."/>
            <person name="Huang J."/>
            <person name="Sun D."/>
            <person name="Wang L."/>
            <person name="Ye M."/>
            <person name="Zou H."/>
        </authorList>
    </citation>
    <scope>IDENTIFICATION BY MASS SPECTROMETRY [LARGE SCALE ANALYSIS]</scope>
    <source>
        <tissue>Liver</tissue>
    </source>
</reference>
<reference key="13">
    <citation type="journal article" date="2015" name="Proteomics">
        <title>N-terminome analysis of the human mitochondrial proteome.</title>
        <authorList>
            <person name="Vaca Jacome A.S."/>
            <person name="Rabilloud T."/>
            <person name="Schaeffer-Reiss C."/>
            <person name="Rompais M."/>
            <person name="Ayoub D."/>
            <person name="Lane L."/>
            <person name="Bairoch A."/>
            <person name="Van Dorsselaer A."/>
            <person name="Carapito C."/>
        </authorList>
    </citation>
    <scope>IDENTIFICATION BY MASS SPECTROMETRY [LARGE SCALE ANALYSIS]</scope>
</reference>
<reference key="14">
    <citation type="journal article" date="2019" name="Neurogenetics">
        <title>Mitochondrial ribosomal protein PTCD3 mutations cause oxidative phosphorylation defects with Leigh syndrome.</title>
        <authorList>
            <person name="Borna N.N."/>
            <person name="Kishita Y."/>
            <person name="Kohda M."/>
            <person name="Lim S.C."/>
            <person name="Shimura M."/>
            <person name="Wu Y."/>
            <person name="Mogushi K."/>
            <person name="Yatsuka Y."/>
            <person name="Harashima H."/>
            <person name="Hisatomi Y."/>
            <person name="Fushimi T."/>
            <person name="Ichimoto K."/>
            <person name="Murayama K."/>
            <person name="Ohtake A."/>
            <person name="Okazaki Y."/>
        </authorList>
    </citation>
    <scope>INVOLVEMENT IN COXPD51</scope>
</reference>
<reference key="15">
    <citation type="journal article" date="2015" name="Science">
        <title>Ribosome. The structure of the human mitochondrial ribosome.</title>
        <authorList>
            <person name="Amunts A."/>
            <person name="Brown A."/>
            <person name="Toots J."/>
            <person name="Scheres S.H."/>
            <person name="Ramakrishnan V."/>
        </authorList>
    </citation>
    <scope>STRUCTURE BY ELECTRON MICROSCOPY (3.50 ANGSTROMS)</scope>
    <scope>SUBUNIT</scope>
</reference>
<gene>
    <name type="primary">PTCD3</name>
    <name type="synonym">MRPS39</name>
    <name type="ORF">TRG15</name>
</gene>
<sequence length="689" mass="78550">MAVVSAVRWLGLRSRLGQPLTGRRAGLCEQARSCRFYSGSATLSKVEGTDVTGIEEVVIPKKKTWDKVAVLQALASTVNRDTTAVPYVFQDDPYLMPASSLESRSFLLAKKSGENVAKFIINSYPKYFQKDIAEPHIPCLMPEYFEPQIKDISEAALKERIELRKVKASVDMFDQLLQAGTTVSLETTNSLLDLLCYYGDQEPSTDYHFQQTGQSEALEEENDETSRRKAGHQFGVTWRAKNNAERIFSLMPEKNEHSYCTMIRGMVKHRAYEQALNLYTELLNNRLHADVYTFNALIEATVCAINEKFEEKWSKILELLRHMVAQKVKPNLQTFNTILKCLRRFHVFARSPALQVLREMKAIGIEPSLATYHHIIRLFDQPGDPLKRSSFIIYDIMNELMGKRFSPKDPDDDKFFQSAMSICSSLRDLELAYQVHGLLKTGDNWKFIGPDQHRNFYYSKFFDLICLMEQIDVTLKWYEDLIPSAYFPHSQTMIHLLQALDVANRLEVIPKIWKDSKEYGHTFRSDLREEILMLMARDKHPPELQVAFADCAADIKSAYESQPIRQTAQDWPATSLNCIAILFLRAGRTQEAWKMLGLFRKHNKIPRSELLNELMDSAKVSNSPSQAIEVVELASAFSLPICEGLTQRVMSDFAINQEQKEALSNLTALTSDSDTDSSSDSDSDTSEGK</sequence>
<keyword id="KW-0002">3D-structure</keyword>
<keyword id="KW-0007">Acetylation</keyword>
<keyword id="KW-0025">Alternative splicing</keyword>
<keyword id="KW-0496">Mitochondrion</keyword>
<keyword id="KW-1274">Primary mitochondrial disease</keyword>
<keyword id="KW-1267">Proteomics identification</keyword>
<keyword id="KW-1185">Reference proteome</keyword>
<keyword id="KW-0677">Repeat</keyword>
<keyword id="KW-0687">Ribonucleoprotein</keyword>
<keyword id="KW-0689">Ribosomal protein</keyword>
<keyword id="KW-0694">RNA-binding</keyword>
<keyword id="KW-0699">rRNA-binding</keyword>
<keyword id="KW-0809">Transit peptide</keyword>
<keyword id="KW-0810">Translation regulation</keyword>
<protein>
    <recommendedName>
        <fullName evidence="8">Small ribosomal subunit protein mS39</fullName>
    </recommendedName>
    <alternativeName>
        <fullName>28S ribosomal protein S39, mitochondrial</fullName>
        <shortName>MRP-S39</shortName>
    </alternativeName>
    <alternativeName>
        <fullName>Pentatricopeptide repeat domain-containing protein 3, mitochondrial</fullName>
    </alternativeName>
    <alternativeName>
        <fullName>Transformation-related gene 15 protein</fullName>
        <shortName>TRG-15</shortName>
    </alternativeName>
</protein>
<name>PTCD3_HUMAN</name>
<organism>
    <name type="scientific">Homo sapiens</name>
    <name type="common">Human</name>
    <dbReference type="NCBI Taxonomy" id="9606"/>
    <lineage>
        <taxon>Eukaryota</taxon>
        <taxon>Metazoa</taxon>
        <taxon>Chordata</taxon>
        <taxon>Craniata</taxon>
        <taxon>Vertebrata</taxon>
        <taxon>Euteleostomi</taxon>
        <taxon>Mammalia</taxon>
        <taxon>Eutheria</taxon>
        <taxon>Euarchontoglires</taxon>
        <taxon>Primates</taxon>
        <taxon>Haplorrhini</taxon>
        <taxon>Catarrhini</taxon>
        <taxon>Hominidae</taxon>
        <taxon>Homo</taxon>
    </lineage>
</organism>
<comment type="function">
    <text evidence="3">Mitochondrial RNA-binding protein that has a role in mitochondrial translation.</text>
</comment>
<comment type="subunit">
    <text evidence="3 4 5">Component of the mitochondrial small ribosomal subunit (mt-SSU). Mature mammalian 55S mitochondrial ribosomes consist of a small (28S) and a large (39S) subunit. The 28S small subunit contains a 12S ribosomal RNA (12S mt-rRNA) and 30 different proteins. The 39S large subunit contains a 16S rRNA (16S mt-rRNA), a copy of mitochondrial valine transfer RNA (mt-tRNA(Val)), which plays an integral structural role, and 52 different proteins. Associated with the 12S mitochondrial rRNA (12S mt-rRNA).</text>
</comment>
<comment type="interaction">
    <interactant intactId="EBI-721110">
        <id>Q96EY7</id>
    </interactant>
    <interactant intactId="EBI-2340947">
        <id>Q8N448</id>
        <label>LNX2</label>
    </interactant>
    <organismsDiffer>false</organismsDiffer>
    <experiments>3</experiments>
</comment>
<comment type="interaction">
    <interactant intactId="EBI-721110">
        <id>Q96EY7</id>
    </interactant>
    <interactant intactId="EBI-2880040">
        <id>P82914</id>
        <label>MRPS15</label>
    </interactant>
    <organismsDiffer>false</organismsDiffer>
    <experiments>3</experiments>
</comment>
<comment type="subcellular location">
    <subcellularLocation>
        <location evidence="3 4">Mitochondrion</location>
    </subcellularLocation>
</comment>
<comment type="alternative products">
    <event type="alternative splicing"/>
    <isoform>
        <id>Q96EY7-1</id>
        <name>1</name>
        <sequence type="displayed"/>
    </isoform>
    <isoform>
        <id>Q96EY7-2</id>
        <name>2</name>
        <sequence type="described" ref="VSP_028191 VSP_028192"/>
    </isoform>
</comment>
<comment type="tissue specificity">
    <text evidence="3">Abundant in testes, skeletal muscle and heart tissue.</text>
</comment>
<comment type="disease" evidence="6">
    <disease id="DI-05943">
        <name>Combined oxidative phosphorylation deficiency 51</name>
        <acronym>COXPD51</acronym>
        <description>An autosomal recessive, mitochondrial disorder characterized by intrauterine growth retardation, low birth weight, poor overall growth, progressive limb rigidity, delayed psychomotor development, hearing loss, and optic atrophy. Brain imaging shows abnormal bilateral signs at the basal ganglia and brainstem. Patient cells show decreased mitochondrial complex I and IV levels and activities, and generalized mitochondrial translation defects.</description>
        <dbReference type="MIM" id="619057"/>
    </disease>
    <text>The disease may be caused by variants affecting the gene represented in this entry.</text>
</comment>
<comment type="similarity">
    <text evidence="9">Belongs to the mitochondrion-specific ribosomal protein mS39 family.</text>
</comment>
<dbReference type="EMBL" id="AK000765">
    <property type="protein sequence ID" value="BAA91370.1"/>
    <property type="molecule type" value="mRNA"/>
</dbReference>
<dbReference type="EMBL" id="AC009309">
    <property type="status" value="NOT_ANNOTATED_CDS"/>
    <property type="molecule type" value="Genomic_DNA"/>
</dbReference>
<dbReference type="EMBL" id="CH471053">
    <property type="protein sequence ID" value="EAW99464.1"/>
    <property type="molecule type" value="Genomic_DNA"/>
</dbReference>
<dbReference type="EMBL" id="CH471053">
    <property type="protein sequence ID" value="EAW99465.1"/>
    <property type="molecule type" value="Genomic_DNA"/>
</dbReference>
<dbReference type="EMBL" id="BC001758">
    <property type="protein sequence ID" value="AAH01758.3"/>
    <property type="molecule type" value="mRNA"/>
</dbReference>
<dbReference type="EMBL" id="BC011832">
    <property type="protein sequence ID" value="AAH11832.3"/>
    <property type="molecule type" value="mRNA"/>
</dbReference>
<dbReference type="EMBL" id="AL832520">
    <property type="protein sequence ID" value="CAH56345.1"/>
    <property type="molecule type" value="mRNA"/>
</dbReference>
<dbReference type="EMBL" id="AY277598">
    <property type="protein sequence ID" value="AAQ18037.1"/>
    <property type="molecule type" value="mRNA"/>
</dbReference>
<dbReference type="CCDS" id="CCDS33235.1">
    <molecule id="Q96EY7-1"/>
</dbReference>
<dbReference type="RefSeq" id="NP_060422.4">
    <molecule id="Q96EY7-1"/>
    <property type="nucleotide sequence ID" value="NM_017952.5"/>
</dbReference>
<dbReference type="PDB" id="3J9M">
    <property type="method" value="EM"/>
    <property type="resolution" value="3.50 A"/>
    <property type="chains" value="A4=1-689"/>
</dbReference>
<dbReference type="PDB" id="6NU2">
    <property type="method" value="EM"/>
    <property type="resolution" value="3.90 A"/>
    <property type="chains" value="A4=56-639"/>
</dbReference>
<dbReference type="PDB" id="6NU3">
    <property type="method" value="EM"/>
    <property type="resolution" value="4.40 A"/>
    <property type="chains" value="A4=56-639"/>
</dbReference>
<dbReference type="PDB" id="6RW4">
    <property type="method" value="EM"/>
    <property type="resolution" value="2.97 A"/>
    <property type="chains" value="4=1-689"/>
</dbReference>
<dbReference type="PDB" id="6RW5">
    <property type="method" value="EM"/>
    <property type="resolution" value="3.14 A"/>
    <property type="chains" value="4=1-689"/>
</dbReference>
<dbReference type="PDB" id="6VLZ">
    <property type="method" value="EM"/>
    <property type="resolution" value="2.97 A"/>
    <property type="chains" value="A4=1-689"/>
</dbReference>
<dbReference type="PDB" id="6VMI">
    <property type="method" value="EM"/>
    <property type="resolution" value="2.96 A"/>
    <property type="chains" value="A4=1-689"/>
</dbReference>
<dbReference type="PDB" id="6ZM5">
    <property type="method" value="EM"/>
    <property type="resolution" value="2.89 A"/>
    <property type="chains" value="A4=1-689"/>
</dbReference>
<dbReference type="PDB" id="6ZM6">
    <property type="method" value="EM"/>
    <property type="resolution" value="2.59 A"/>
    <property type="chains" value="A4=1-689"/>
</dbReference>
<dbReference type="PDB" id="6ZS9">
    <property type="method" value="EM"/>
    <property type="resolution" value="4.00 A"/>
    <property type="chains" value="A4=56-689"/>
</dbReference>
<dbReference type="PDB" id="6ZSA">
    <property type="method" value="EM"/>
    <property type="resolution" value="4.00 A"/>
    <property type="chains" value="A4=56-689"/>
</dbReference>
<dbReference type="PDB" id="6ZSB">
    <property type="method" value="EM"/>
    <property type="resolution" value="4.50 A"/>
    <property type="chains" value="A4=56-689"/>
</dbReference>
<dbReference type="PDB" id="6ZSC">
    <property type="method" value="EM"/>
    <property type="resolution" value="3.50 A"/>
    <property type="chains" value="A4=56-689"/>
</dbReference>
<dbReference type="PDB" id="6ZSD">
    <property type="method" value="EM"/>
    <property type="resolution" value="3.70 A"/>
    <property type="chains" value="A4=56-689"/>
</dbReference>
<dbReference type="PDB" id="6ZSE">
    <property type="method" value="EM"/>
    <property type="resolution" value="5.00 A"/>
    <property type="chains" value="A4=56-689"/>
</dbReference>
<dbReference type="PDB" id="6ZSG">
    <property type="method" value="EM"/>
    <property type="resolution" value="4.00 A"/>
    <property type="chains" value="A4=56-689"/>
</dbReference>
<dbReference type="PDB" id="7A5F">
    <property type="method" value="EM"/>
    <property type="resolution" value="4.40 A"/>
    <property type="chains" value="e6=1-689"/>
</dbReference>
<dbReference type="PDB" id="7A5G">
    <property type="method" value="EM"/>
    <property type="resolution" value="4.33 A"/>
    <property type="chains" value="e6=1-689"/>
</dbReference>
<dbReference type="PDB" id="7A5I">
    <property type="method" value="EM"/>
    <property type="resolution" value="3.70 A"/>
    <property type="chains" value="e6=1-689"/>
</dbReference>
<dbReference type="PDB" id="7A5K">
    <property type="method" value="EM"/>
    <property type="resolution" value="3.70 A"/>
    <property type="chains" value="e6=1-689"/>
</dbReference>
<dbReference type="PDB" id="7L08">
    <property type="method" value="EM"/>
    <property type="resolution" value="3.49 A"/>
    <property type="chains" value="A4=1-689"/>
</dbReference>
<dbReference type="PDB" id="7OG4">
    <property type="method" value="EM"/>
    <property type="resolution" value="3.80 A"/>
    <property type="chains" value="A4=1-689"/>
</dbReference>
<dbReference type="PDB" id="7P2E">
    <property type="method" value="EM"/>
    <property type="resolution" value="2.40 A"/>
    <property type="chains" value="4=1-689"/>
</dbReference>
<dbReference type="PDB" id="7PNX">
    <property type="method" value="EM"/>
    <property type="resolution" value="2.76 A"/>
    <property type="chains" value="4=1-689"/>
</dbReference>
<dbReference type="PDB" id="7PNY">
    <property type="method" value="EM"/>
    <property type="resolution" value="3.06 A"/>
    <property type="chains" value="4=1-689"/>
</dbReference>
<dbReference type="PDB" id="7PNZ">
    <property type="method" value="EM"/>
    <property type="resolution" value="3.09 A"/>
    <property type="chains" value="4=1-689"/>
</dbReference>
<dbReference type="PDB" id="7PO0">
    <property type="method" value="EM"/>
    <property type="resolution" value="2.90 A"/>
    <property type="chains" value="4=1-689"/>
</dbReference>
<dbReference type="PDB" id="7PO1">
    <property type="method" value="EM"/>
    <property type="resolution" value="2.92 A"/>
    <property type="chains" value="4=1-689"/>
</dbReference>
<dbReference type="PDB" id="7PO2">
    <property type="method" value="EM"/>
    <property type="resolution" value="3.09 A"/>
    <property type="chains" value="4=1-689"/>
</dbReference>
<dbReference type="PDB" id="7PO3">
    <property type="method" value="EM"/>
    <property type="resolution" value="2.92 A"/>
    <property type="chains" value="4=1-689"/>
</dbReference>
<dbReference type="PDB" id="7QI4">
    <property type="method" value="EM"/>
    <property type="resolution" value="2.21 A"/>
    <property type="chains" value="A4=1-689"/>
</dbReference>
<dbReference type="PDB" id="7QI5">
    <property type="method" value="EM"/>
    <property type="resolution" value="2.63 A"/>
    <property type="chains" value="A4=1-689"/>
</dbReference>
<dbReference type="PDB" id="7QI6">
    <property type="method" value="EM"/>
    <property type="resolution" value="2.98 A"/>
    <property type="chains" value="A4=1-689"/>
</dbReference>
<dbReference type="PDB" id="8ANY">
    <property type="method" value="EM"/>
    <property type="resolution" value="2.85 A"/>
    <property type="chains" value="A4=1-689"/>
</dbReference>
<dbReference type="PDB" id="8CSP">
    <property type="method" value="EM"/>
    <property type="resolution" value="2.66 A"/>
    <property type="chains" value="4=1-689"/>
</dbReference>
<dbReference type="PDB" id="8CSQ">
    <property type="method" value="EM"/>
    <property type="resolution" value="2.54 A"/>
    <property type="chains" value="4=1-689"/>
</dbReference>
<dbReference type="PDB" id="8CSR">
    <property type="method" value="EM"/>
    <property type="resolution" value="2.54 A"/>
    <property type="chains" value="4=1-689"/>
</dbReference>
<dbReference type="PDB" id="8CSS">
    <property type="method" value="EM"/>
    <property type="resolution" value="2.36 A"/>
    <property type="chains" value="4=1-689"/>
</dbReference>
<dbReference type="PDB" id="8CST">
    <property type="method" value="EM"/>
    <property type="resolution" value="2.85 A"/>
    <property type="chains" value="4=1-689"/>
</dbReference>
<dbReference type="PDB" id="8CSU">
    <property type="method" value="EM"/>
    <property type="resolution" value="3.03 A"/>
    <property type="chains" value="4=1-689"/>
</dbReference>
<dbReference type="PDB" id="8K2A">
    <property type="method" value="EM"/>
    <property type="resolution" value="2.90 A"/>
    <property type="chains" value="So=1-689"/>
</dbReference>
<dbReference type="PDB" id="8OIR">
    <property type="method" value="EM"/>
    <property type="resolution" value="3.10 A"/>
    <property type="chains" value="Ae=1-689"/>
</dbReference>
<dbReference type="PDB" id="8OIS">
    <property type="method" value="EM"/>
    <property type="resolution" value="3.00 A"/>
    <property type="chains" value="Ae=1-689"/>
</dbReference>
<dbReference type="PDB" id="8QRK">
    <property type="method" value="EM"/>
    <property type="resolution" value="6.69 A"/>
    <property type="chains" value="4=1-689"/>
</dbReference>
<dbReference type="PDB" id="8QRL">
    <property type="method" value="EM"/>
    <property type="resolution" value="3.34 A"/>
    <property type="chains" value="4=1-689"/>
</dbReference>
<dbReference type="PDB" id="8QRM">
    <property type="method" value="EM"/>
    <property type="resolution" value="3.05 A"/>
    <property type="chains" value="4=1-689"/>
</dbReference>
<dbReference type="PDB" id="8QRN">
    <property type="method" value="EM"/>
    <property type="resolution" value="2.98 A"/>
    <property type="chains" value="4=1-689"/>
</dbReference>
<dbReference type="PDB" id="8RRI">
    <property type="method" value="EM"/>
    <property type="resolution" value="2.40 A"/>
    <property type="chains" value="A4=1-689"/>
</dbReference>
<dbReference type="PDB" id="8XT0">
    <property type="method" value="EM"/>
    <property type="resolution" value="3.20 A"/>
    <property type="chains" value="So=1-689"/>
</dbReference>
<dbReference type="PDB" id="8XT2">
    <property type="method" value="EM"/>
    <property type="resolution" value="3.30 A"/>
    <property type="chains" value="So=1-689"/>
</dbReference>
<dbReference type="PDBsum" id="3J9M"/>
<dbReference type="PDBsum" id="6NU2"/>
<dbReference type="PDBsum" id="6NU3"/>
<dbReference type="PDBsum" id="6RW4"/>
<dbReference type="PDBsum" id="6RW5"/>
<dbReference type="PDBsum" id="6VLZ"/>
<dbReference type="PDBsum" id="6VMI"/>
<dbReference type="PDBsum" id="6ZM5"/>
<dbReference type="PDBsum" id="6ZM6"/>
<dbReference type="PDBsum" id="6ZS9"/>
<dbReference type="PDBsum" id="6ZSA"/>
<dbReference type="PDBsum" id="6ZSB"/>
<dbReference type="PDBsum" id="6ZSC"/>
<dbReference type="PDBsum" id="6ZSD"/>
<dbReference type="PDBsum" id="6ZSE"/>
<dbReference type="PDBsum" id="6ZSG"/>
<dbReference type="PDBsum" id="7A5F"/>
<dbReference type="PDBsum" id="7A5G"/>
<dbReference type="PDBsum" id="7A5I"/>
<dbReference type="PDBsum" id="7A5K"/>
<dbReference type="PDBsum" id="7L08"/>
<dbReference type="PDBsum" id="7OG4"/>
<dbReference type="PDBsum" id="7P2E"/>
<dbReference type="PDBsum" id="7PNX"/>
<dbReference type="PDBsum" id="7PNY"/>
<dbReference type="PDBsum" id="7PNZ"/>
<dbReference type="PDBsum" id="7PO0"/>
<dbReference type="PDBsum" id="7PO1"/>
<dbReference type="PDBsum" id="7PO2"/>
<dbReference type="PDBsum" id="7PO3"/>
<dbReference type="PDBsum" id="7QI4"/>
<dbReference type="PDBsum" id="7QI5"/>
<dbReference type="PDBsum" id="7QI6"/>
<dbReference type="PDBsum" id="8ANY"/>
<dbReference type="PDBsum" id="8CSP"/>
<dbReference type="PDBsum" id="8CSQ"/>
<dbReference type="PDBsum" id="8CSR"/>
<dbReference type="PDBsum" id="8CSS"/>
<dbReference type="PDBsum" id="8CST"/>
<dbReference type="PDBsum" id="8CSU"/>
<dbReference type="PDBsum" id="8K2A"/>
<dbReference type="PDBsum" id="8OIR"/>
<dbReference type="PDBsum" id="8OIS"/>
<dbReference type="PDBsum" id="8QRK"/>
<dbReference type="PDBsum" id="8QRL"/>
<dbReference type="PDBsum" id="8QRM"/>
<dbReference type="PDBsum" id="8QRN"/>
<dbReference type="PDBsum" id="8RRI"/>
<dbReference type="PDBsum" id="8XT0"/>
<dbReference type="PDBsum" id="8XT2"/>
<dbReference type="EMDB" id="EMD-0514"/>
<dbReference type="EMDB" id="EMD-0515"/>
<dbReference type="EMDB" id="EMD-10021"/>
<dbReference type="EMDB" id="EMD-10022"/>
<dbReference type="EMDB" id="EMD-11278"/>
<dbReference type="EMDB" id="EMD-11279"/>
<dbReference type="EMDB" id="EMD-11390"/>
<dbReference type="EMDB" id="EMD-11391"/>
<dbReference type="EMDB" id="EMD-11392"/>
<dbReference type="EMDB" id="EMD-11393"/>
<dbReference type="EMDB" id="EMD-11394"/>
<dbReference type="EMDB" id="EMD-11395"/>
<dbReference type="EMDB" id="EMD-11397"/>
<dbReference type="EMDB" id="EMD-11641"/>
<dbReference type="EMDB" id="EMD-11642"/>
<dbReference type="EMDB" id="EMD-11644"/>
<dbReference type="EMDB" id="EMD-11646"/>
<dbReference type="EMDB" id="EMD-12877"/>
<dbReference type="EMDB" id="EMD-13170"/>
<dbReference type="EMDB" id="EMD-13555"/>
<dbReference type="EMDB" id="EMD-13556"/>
<dbReference type="EMDB" id="EMD-13557"/>
<dbReference type="EMDB" id="EMD-13558"/>
<dbReference type="EMDB" id="EMD-13559"/>
<dbReference type="EMDB" id="EMD-13560"/>
<dbReference type="EMDB" id="EMD-13561"/>
<dbReference type="EMDB" id="EMD-13980"/>
<dbReference type="EMDB" id="EMD-13981"/>
<dbReference type="EMDB" id="EMD-13982"/>
<dbReference type="EMDB" id="EMD-15544"/>
<dbReference type="EMDB" id="EMD-16897"/>
<dbReference type="EMDB" id="EMD-16898"/>
<dbReference type="EMDB" id="EMD-19460"/>
<dbReference type="EMDB" id="EMD-21233"/>
<dbReference type="EMDB" id="EMD-21242"/>
<dbReference type="EMDB" id="EMD-23096"/>
<dbReference type="EMDB" id="EMD-26966"/>
<dbReference type="EMDB" id="EMD-26967"/>
<dbReference type="EMDB" id="EMD-26968"/>
<dbReference type="EMDB" id="EMD-26969"/>
<dbReference type="EMDB" id="EMD-26970"/>
<dbReference type="EMDB" id="EMD-26971"/>
<dbReference type="EMDB" id="EMD-36836"/>
<dbReference type="EMDB" id="EMD-38632"/>
<dbReference type="EMDB" id="EMD-38634"/>
<dbReference type="SMR" id="Q96EY7"/>
<dbReference type="BioGRID" id="120366">
    <property type="interactions" value="373"/>
</dbReference>
<dbReference type="ComplexPortal" id="CPX-5225">
    <property type="entry name" value="28S mitochondrial small ribosomal subunit"/>
</dbReference>
<dbReference type="CORUM" id="Q96EY7"/>
<dbReference type="FunCoup" id="Q96EY7">
    <property type="interactions" value="3585"/>
</dbReference>
<dbReference type="IntAct" id="Q96EY7">
    <property type="interactions" value="172"/>
</dbReference>
<dbReference type="MINT" id="Q96EY7"/>
<dbReference type="STRING" id="9606.ENSP00000254630"/>
<dbReference type="GlyGen" id="Q96EY7">
    <property type="glycosylation" value="2 sites, 1 O-linked glycan (2 sites)"/>
</dbReference>
<dbReference type="iPTMnet" id="Q96EY7"/>
<dbReference type="MetOSite" id="Q96EY7"/>
<dbReference type="PhosphoSitePlus" id="Q96EY7"/>
<dbReference type="SwissPalm" id="Q96EY7"/>
<dbReference type="BioMuta" id="PTCD3"/>
<dbReference type="DMDM" id="74731633"/>
<dbReference type="jPOST" id="Q96EY7"/>
<dbReference type="MassIVE" id="Q96EY7"/>
<dbReference type="PaxDb" id="9606-ENSP00000254630"/>
<dbReference type="PeptideAtlas" id="Q96EY7"/>
<dbReference type="ProteomicsDB" id="76472">
    <molecule id="Q96EY7-1"/>
</dbReference>
<dbReference type="ProteomicsDB" id="76473">
    <molecule id="Q96EY7-2"/>
</dbReference>
<dbReference type="Pumba" id="Q96EY7"/>
<dbReference type="Antibodypedia" id="32009">
    <property type="antibodies" value="67 antibodies from 21 providers"/>
</dbReference>
<dbReference type="DNASU" id="55037"/>
<dbReference type="Ensembl" id="ENST00000254630.12">
    <molecule id="Q96EY7-1"/>
    <property type="protein sequence ID" value="ENSP00000254630.7"/>
    <property type="gene ID" value="ENSG00000132300.19"/>
</dbReference>
<dbReference type="GeneID" id="55037"/>
<dbReference type="KEGG" id="hsa:55037"/>
<dbReference type="MANE-Select" id="ENST00000254630.12">
    <property type="protein sequence ID" value="ENSP00000254630.7"/>
    <property type="RefSeq nucleotide sequence ID" value="NM_017952.6"/>
    <property type="RefSeq protein sequence ID" value="NP_060422.4"/>
</dbReference>
<dbReference type="UCSC" id="uc002sqw.2">
    <molecule id="Q96EY7-1"/>
    <property type="organism name" value="human"/>
</dbReference>
<dbReference type="AGR" id="HGNC:24717"/>
<dbReference type="CTD" id="55037"/>
<dbReference type="DisGeNET" id="55037"/>
<dbReference type="GeneCards" id="PTCD3"/>
<dbReference type="HGNC" id="HGNC:24717">
    <property type="gene designation" value="PTCD3"/>
</dbReference>
<dbReference type="HPA" id="ENSG00000132300">
    <property type="expression patterns" value="Low tissue specificity"/>
</dbReference>
<dbReference type="MalaCards" id="PTCD3"/>
<dbReference type="MIM" id="614918">
    <property type="type" value="gene"/>
</dbReference>
<dbReference type="MIM" id="619057">
    <property type="type" value="phenotype"/>
</dbReference>
<dbReference type="neXtProt" id="NX_Q96EY7"/>
<dbReference type="OpenTargets" id="ENSG00000132300"/>
<dbReference type="PharmGKB" id="PA147357465"/>
<dbReference type="VEuPathDB" id="HostDB:ENSG00000132300"/>
<dbReference type="eggNOG" id="KOG4422">
    <property type="taxonomic scope" value="Eukaryota"/>
</dbReference>
<dbReference type="GeneTree" id="ENSGT00390000016876"/>
<dbReference type="HOGENOM" id="CLU_026264_0_1_1"/>
<dbReference type="InParanoid" id="Q96EY7"/>
<dbReference type="OMA" id="FMHQEAQ"/>
<dbReference type="OrthoDB" id="185373at2759"/>
<dbReference type="PAN-GO" id="Q96EY7">
    <property type="GO annotations" value="4 GO annotations based on evolutionary models"/>
</dbReference>
<dbReference type="PhylomeDB" id="Q96EY7"/>
<dbReference type="TreeFam" id="TF320158"/>
<dbReference type="PathwayCommons" id="Q96EY7"/>
<dbReference type="Reactome" id="R-HSA-5368286">
    <property type="pathway name" value="Mitochondrial translation initiation"/>
</dbReference>
<dbReference type="Reactome" id="R-HSA-5389840">
    <property type="pathway name" value="Mitochondrial translation elongation"/>
</dbReference>
<dbReference type="Reactome" id="R-HSA-5419276">
    <property type="pathway name" value="Mitochondrial translation termination"/>
</dbReference>
<dbReference type="SignaLink" id="Q96EY7"/>
<dbReference type="SIGNOR" id="Q96EY7"/>
<dbReference type="BioGRID-ORCS" id="55037">
    <property type="hits" value="449 hits in 1163 CRISPR screens"/>
</dbReference>
<dbReference type="ChiTaRS" id="PTCD3">
    <property type="organism name" value="human"/>
</dbReference>
<dbReference type="GenomeRNAi" id="55037"/>
<dbReference type="Pharos" id="Q96EY7">
    <property type="development level" value="Tbio"/>
</dbReference>
<dbReference type="PRO" id="PR:Q96EY7"/>
<dbReference type="Proteomes" id="UP000005640">
    <property type="component" value="Chromosome 2"/>
</dbReference>
<dbReference type="RNAct" id="Q96EY7">
    <property type="molecule type" value="protein"/>
</dbReference>
<dbReference type="Bgee" id="ENSG00000132300">
    <property type="expression patterns" value="Expressed in adrenal tissue and 203 other cell types or tissues"/>
</dbReference>
<dbReference type="ExpressionAtlas" id="Q96EY7">
    <property type="expression patterns" value="baseline and differential"/>
</dbReference>
<dbReference type="GO" id="GO:0005829">
    <property type="term" value="C:cytosol"/>
    <property type="evidence" value="ECO:0000314"/>
    <property type="project" value="HPA"/>
</dbReference>
<dbReference type="GO" id="GO:0005743">
    <property type="term" value="C:mitochondrial inner membrane"/>
    <property type="evidence" value="ECO:0000304"/>
    <property type="project" value="Reactome"/>
</dbReference>
<dbReference type="GO" id="GO:0005759">
    <property type="term" value="C:mitochondrial matrix"/>
    <property type="evidence" value="ECO:0000314"/>
    <property type="project" value="FlyBase"/>
</dbReference>
<dbReference type="GO" id="GO:0005763">
    <property type="term" value="C:mitochondrial small ribosomal subunit"/>
    <property type="evidence" value="ECO:0000303"/>
    <property type="project" value="ComplexPortal"/>
</dbReference>
<dbReference type="GO" id="GO:0005739">
    <property type="term" value="C:mitochondrion"/>
    <property type="evidence" value="ECO:0000314"/>
    <property type="project" value="HPA"/>
</dbReference>
<dbReference type="GO" id="GO:0005654">
    <property type="term" value="C:nucleoplasm"/>
    <property type="evidence" value="ECO:0000314"/>
    <property type="project" value="HPA"/>
</dbReference>
<dbReference type="GO" id="GO:0005886">
    <property type="term" value="C:plasma membrane"/>
    <property type="evidence" value="ECO:0000314"/>
    <property type="project" value="HPA"/>
</dbReference>
<dbReference type="GO" id="GO:0043024">
    <property type="term" value="F:ribosomal small subunit binding"/>
    <property type="evidence" value="ECO:0000314"/>
    <property type="project" value="UniProtKB"/>
</dbReference>
<dbReference type="GO" id="GO:0003723">
    <property type="term" value="F:RNA binding"/>
    <property type="evidence" value="ECO:0007005"/>
    <property type="project" value="UniProtKB"/>
</dbReference>
<dbReference type="GO" id="GO:0019843">
    <property type="term" value="F:rRNA binding"/>
    <property type="evidence" value="ECO:0000314"/>
    <property type="project" value="UniProtKB"/>
</dbReference>
<dbReference type="GO" id="GO:0032543">
    <property type="term" value="P:mitochondrial translation"/>
    <property type="evidence" value="ECO:0000315"/>
    <property type="project" value="UniProtKB"/>
</dbReference>
<dbReference type="GO" id="GO:0006417">
    <property type="term" value="P:regulation of translation"/>
    <property type="evidence" value="ECO:0007669"/>
    <property type="project" value="UniProtKB-KW"/>
</dbReference>
<dbReference type="FunFam" id="1.25.40.10:FF:000420">
    <property type="entry name" value="Pentatricopeptide repeat domain-containing protein 3, mitochondrial"/>
    <property type="match status" value="1"/>
</dbReference>
<dbReference type="FunFam" id="1.25.40.10:FF:000457">
    <property type="entry name" value="Pentatricopeptide repeat domain-containing protein 3, mitochondrial"/>
    <property type="match status" value="1"/>
</dbReference>
<dbReference type="Gene3D" id="1.25.40.10">
    <property type="entry name" value="Tetratricopeptide repeat domain"/>
    <property type="match status" value="2"/>
</dbReference>
<dbReference type="InterPro" id="IPR002885">
    <property type="entry name" value="Pentatricopeptide_rpt"/>
</dbReference>
<dbReference type="InterPro" id="IPR037387">
    <property type="entry name" value="PTCD3"/>
</dbReference>
<dbReference type="InterPro" id="IPR055063">
    <property type="entry name" value="Rib_mS39_PPR"/>
</dbReference>
<dbReference type="InterPro" id="IPR011990">
    <property type="entry name" value="TPR-like_helical_dom_sf"/>
</dbReference>
<dbReference type="PANTHER" id="PTHR16276">
    <property type="entry name" value="PENTATRICOPEPTIDE REPEAT DOMAIN-CONTAINING PROTEIN 3"/>
    <property type="match status" value="1"/>
</dbReference>
<dbReference type="PANTHER" id="PTHR16276:SF1">
    <property type="entry name" value="SMALL RIBOSOMAL SUBUNIT PROTEIN MS39"/>
    <property type="match status" value="1"/>
</dbReference>
<dbReference type="Pfam" id="PF13812">
    <property type="entry name" value="PPR_3"/>
    <property type="match status" value="2"/>
</dbReference>
<dbReference type="Pfam" id="PF22330">
    <property type="entry name" value="Rib_mS39_PPR"/>
    <property type="match status" value="1"/>
</dbReference>
<dbReference type="PROSITE" id="PS51375">
    <property type="entry name" value="PPR"/>
    <property type="match status" value="4"/>
</dbReference>
<evidence type="ECO:0000255" key="1"/>
<evidence type="ECO:0000256" key="2">
    <source>
        <dbReference type="SAM" id="MobiDB-lite"/>
    </source>
</evidence>
<evidence type="ECO:0000269" key="3">
    <source>
    </source>
</evidence>
<evidence type="ECO:0000269" key="4">
    <source>
    </source>
</evidence>
<evidence type="ECO:0000269" key="5">
    <source>
    </source>
</evidence>
<evidence type="ECO:0000269" key="6">
    <source>
    </source>
</evidence>
<evidence type="ECO:0000303" key="7">
    <source>
    </source>
</evidence>
<evidence type="ECO:0000303" key="8">
    <source>
    </source>
</evidence>
<evidence type="ECO:0000305" key="9"/>
<evidence type="ECO:0007744" key="10">
    <source>
    </source>
</evidence>
<evidence type="ECO:0007829" key="11">
    <source>
        <dbReference type="PDB" id="8CSS"/>
    </source>
</evidence>
<evidence type="ECO:0007829" key="12">
    <source>
        <dbReference type="PDB" id="8QRL"/>
    </source>
</evidence>
<feature type="transit peptide" description="Mitochondrion" evidence="1">
    <location>
        <begin position="1"/>
        <end position="37"/>
    </location>
</feature>
<feature type="chain" id="PRO_0000305028" description="Small ribosomal subunit protein mS39">
    <location>
        <begin position="38"/>
        <end position="689"/>
    </location>
</feature>
<feature type="repeat" description="PPR 1">
    <location>
        <begin position="149"/>
        <end position="183"/>
    </location>
</feature>
<feature type="repeat" description="PPR 2">
    <location>
        <begin position="184"/>
        <end position="219"/>
    </location>
</feature>
<feature type="repeat" description="PPR 3">
    <location>
        <begin position="255"/>
        <end position="289"/>
    </location>
</feature>
<feature type="repeat" description="PPR 4">
    <location>
        <begin position="290"/>
        <end position="330"/>
    </location>
</feature>
<feature type="repeat" description="PPR 5">
    <location>
        <begin position="331"/>
        <end position="367"/>
    </location>
</feature>
<feature type="repeat" description="PPR 6">
    <location>
        <begin position="368"/>
        <end position="409"/>
    </location>
</feature>
<feature type="repeat" description="PPR 7">
    <location>
        <begin position="412"/>
        <end position="446"/>
    </location>
</feature>
<feature type="repeat" description="PPR 8">
    <location>
        <begin position="454"/>
        <end position="488"/>
    </location>
</feature>
<feature type="repeat" description="PPR 9">
    <location>
        <begin position="489"/>
        <end position="523"/>
    </location>
</feature>
<feature type="repeat" description="PPR 10">
    <location>
        <begin position="572"/>
        <end position="606"/>
    </location>
</feature>
<feature type="region of interest" description="Disordered" evidence="2">
    <location>
        <begin position="665"/>
        <end position="689"/>
    </location>
</feature>
<feature type="compositionally biased region" description="Acidic residues" evidence="2">
    <location>
        <begin position="673"/>
        <end position="689"/>
    </location>
</feature>
<feature type="modified residue" description="N6-acetyllysine" evidence="10">
    <location>
        <position position="126"/>
    </location>
</feature>
<feature type="splice variant" id="VSP_028191" description="In isoform 2." evidence="7">
    <location>
        <begin position="1"/>
        <end position="409"/>
    </location>
</feature>
<feature type="splice variant" id="VSP_028192" description="In isoform 2." evidence="7">
    <original>PDDD</original>
    <variation>MMAY</variation>
    <location>
        <begin position="410"/>
        <end position="413"/>
    </location>
</feature>
<feature type="sequence variant" id="VAR_035154" description="In dbSNP:rs13393659.">
    <original>A</original>
    <variation>V</variation>
    <location>
        <position position="2"/>
    </location>
</feature>
<feature type="sequence variant" id="VAR_035155" description="In dbSNP:rs2241433.">
    <original>S</original>
    <variation>G</variation>
    <location>
        <position position="681"/>
    </location>
</feature>
<feature type="sequence conflict" description="In Ref. 6; AAQ18037." evidence="9" ref="6">
    <original>L</original>
    <variation>S</variation>
    <location>
        <position position="400"/>
    </location>
</feature>
<feature type="sequence conflict" description="In Ref. 4; AAH01758." evidence="9" ref="4">
    <original>P</original>
    <variation>L</variation>
    <location>
        <position position="488"/>
    </location>
</feature>
<feature type="strand" evidence="11">
    <location>
        <begin position="61"/>
        <end position="65"/>
    </location>
</feature>
<feature type="helix" evidence="11">
    <location>
        <begin position="69"/>
        <end position="77"/>
    </location>
</feature>
<feature type="turn" evidence="11">
    <location>
        <begin position="93"/>
        <end position="95"/>
    </location>
</feature>
<feature type="helix" evidence="11">
    <location>
        <begin position="100"/>
        <end position="123"/>
    </location>
</feature>
<feature type="helix" evidence="11">
    <location>
        <begin position="125"/>
        <end position="128"/>
    </location>
</feature>
<feature type="helix" evidence="11">
    <location>
        <begin position="138"/>
        <end position="140"/>
    </location>
</feature>
<feature type="strand" evidence="11">
    <location>
        <begin position="151"/>
        <end position="153"/>
    </location>
</feature>
<feature type="helix" evidence="11">
    <location>
        <begin position="154"/>
        <end position="163"/>
    </location>
</feature>
<feature type="helix" evidence="11">
    <location>
        <begin position="166"/>
        <end position="179"/>
    </location>
</feature>
<feature type="helix" evidence="11">
    <location>
        <begin position="185"/>
        <end position="198"/>
    </location>
</feature>
<feature type="helix" evidence="11">
    <location>
        <begin position="243"/>
        <end position="250"/>
    </location>
</feature>
<feature type="helix" evidence="11">
    <location>
        <begin position="256"/>
        <end position="268"/>
    </location>
</feature>
<feature type="helix" evidence="11">
    <location>
        <begin position="272"/>
        <end position="284"/>
    </location>
</feature>
<feature type="helix" evidence="11">
    <location>
        <begin position="291"/>
        <end position="303"/>
    </location>
</feature>
<feature type="helix" evidence="11">
    <location>
        <begin position="309"/>
        <end position="325"/>
    </location>
</feature>
<feature type="helix" evidence="11">
    <location>
        <begin position="332"/>
        <end position="342"/>
    </location>
</feature>
<feature type="helix" evidence="11">
    <location>
        <begin position="343"/>
        <end position="349"/>
    </location>
</feature>
<feature type="helix" evidence="11">
    <location>
        <begin position="350"/>
        <end position="362"/>
    </location>
</feature>
<feature type="helix" evidence="11">
    <location>
        <begin position="369"/>
        <end position="379"/>
    </location>
</feature>
<feature type="helix" evidence="12">
    <location>
        <begin position="385"/>
        <end position="387"/>
    </location>
</feature>
<feature type="helix" evidence="11">
    <location>
        <begin position="392"/>
        <end position="400"/>
    </location>
</feature>
<feature type="helix" evidence="11">
    <location>
        <begin position="412"/>
        <end position="414"/>
    </location>
</feature>
<feature type="helix" evidence="11">
    <location>
        <begin position="415"/>
        <end position="426"/>
    </location>
</feature>
<feature type="helix" evidence="11">
    <location>
        <begin position="429"/>
        <end position="440"/>
    </location>
</feature>
<feature type="helix" evidence="11">
    <location>
        <begin position="444"/>
        <end position="448"/>
    </location>
</feature>
<feature type="helix" evidence="11">
    <location>
        <begin position="451"/>
        <end position="468"/>
    </location>
</feature>
<feature type="helix" evidence="11">
    <location>
        <begin position="471"/>
        <end position="481"/>
    </location>
</feature>
<feature type="turn" evidence="11">
    <location>
        <begin position="482"/>
        <end position="485"/>
    </location>
</feature>
<feature type="helix" evidence="11">
    <location>
        <begin position="490"/>
        <end position="503"/>
    </location>
</feature>
<feature type="helix" evidence="11">
    <location>
        <begin position="506"/>
        <end position="508"/>
    </location>
</feature>
<feature type="helix" evidence="11">
    <location>
        <begin position="509"/>
        <end position="518"/>
    </location>
</feature>
<feature type="helix" evidence="11">
    <location>
        <begin position="521"/>
        <end position="523"/>
    </location>
</feature>
<feature type="helix" evidence="11">
    <location>
        <begin position="525"/>
        <end position="536"/>
    </location>
</feature>
<feature type="helix" evidence="11">
    <location>
        <begin position="542"/>
        <end position="560"/>
    </location>
</feature>
<feature type="helix" evidence="12">
    <location>
        <begin position="563"/>
        <end position="566"/>
    </location>
</feature>
<feature type="helix" evidence="11">
    <location>
        <begin position="573"/>
        <end position="586"/>
    </location>
</feature>
<feature type="helix" evidence="11">
    <location>
        <begin position="589"/>
        <end position="602"/>
    </location>
</feature>
<feature type="helix" evidence="11">
    <location>
        <begin position="608"/>
        <end position="620"/>
    </location>
</feature>
<feature type="helix" evidence="11">
    <location>
        <begin position="624"/>
        <end position="636"/>
    </location>
</feature>
<feature type="helix" evidence="11">
    <location>
        <begin position="642"/>
        <end position="652"/>
    </location>
</feature>
<feature type="helix" evidence="11">
    <location>
        <begin position="657"/>
        <end position="666"/>
    </location>
</feature>
<accession>Q96EY7</accession>
<accession>A6NHD2</accession>
<accession>D6W5M1</accession>
<accession>Q597H0</accession>
<accession>Q658Y9</accession>
<accession>Q9BUZ8</accession>
<accession>Q9NWL0</accession>
<proteinExistence type="evidence at protein level"/>